<accession>A4TSI4</accession>
<organism>
    <name type="scientific">Yersinia pestis (strain Pestoides F)</name>
    <dbReference type="NCBI Taxonomy" id="386656"/>
    <lineage>
        <taxon>Bacteria</taxon>
        <taxon>Pseudomonadati</taxon>
        <taxon>Pseudomonadota</taxon>
        <taxon>Gammaproteobacteria</taxon>
        <taxon>Enterobacterales</taxon>
        <taxon>Yersiniaceae</taxon>
        <taxon>Yersinia</taxon>
    </lineage>
</organism>
<feature type="chain" id="PRO_1000016713" description="tRNA uridine 5-carboxymethylaminomethyl modification enzyme MnmG">
    <location>
        <begin position="1"/>
        <end position="629"/>
    </location>
</feature>
<feature type="binding site" evidence="1">
    <location>
        <begin position="13"/>
        <end position="18"/>
    </location>
    <ligand>
        <name>FAD</name>
        <dbReference type="ChEBI" id="CHEBI:57692"/>
    </ligand>
</feature>
<feature type="binding site" evidence="1">
    <location>
        <position position="125"/>
    </location>
    <ligand>
        <name>FAD</name>
        <dbReference type="ChEBI" id="CHEBI:57692"/>
    </ligand>
</feature>
<feature type="binding site" evidence="1">
    <location>
        <position position="180"/>
    </location>
    <ligand>
        <name>FAD</name>
        <dbReference type="ChEBI" id="CHEBI:57692"/>
    </ligand>
</feature>
<feature type="binding site" evidence="1">
    <location>
        <begin position="273"/>
        <end position="287"/>
    </location>
    <ligand>
        <name>NAD(+)</name>
        <dbReference type="ChEBI" id="CHEBI:57540"/>
    </ligand>
</feature>
<feature type="binding site" evidence="1">
    <location>
        <position position="370"/>
    </location>
    <ligand>
        <name>FAD</name>
        <dbReference type="ChEBI" id="CHEBI:57692"/>
    </ligand>
</feature>
<proteinExistence type="inferred from homology"/>
<dbReference type="EMBL" id="CP000668">
    <property type="protein sequence ID" value="ABP42246.1"/>
    <property type="molecule type" value="Genomic_DNA"/>
</dbReference>
<dbReference type="RefSeq" id="WP_002212259.1">
    <property type="nucleotide sequence ID" value="NZ_CP009715.1"/>
</dbReference>
<dbReference type="SMR" id="A4TSI4"/>
<dbReference type="GeneID" id="57974594"/>
<dbReference type="KEGG" id="ypp:YPDSF_3905"/>
<dbReference type="PATRIC" id="fig|386656.14.peg.612"/>
<dbReference type="GO" id="GO:0005829">
    <property type="term" value="C:cytosol"/>
    <property type="evidence" value="ECO:0007669"/>
    <property type="project" value="TreeGrafter"/>
</dbReference>
<dbReference type="GO" id="GO:0050660">
    <property type="term" value="F:flavin adenine dinucleotide binding"/>
    <property type="evidence" value="ECO:0007669"/>
    <property type="project" value="UniProtKB-UniRule"/>
</dbReference>
<dbReference type="GO" id="GO:0030488">
    <property type="term" value="P:tRNA methylation"/>
    <property type="evidence" value="ECO:0007669"/>
    <property type="project" value="TreeGrafter"/>
</dbReference>
<dbReference type="GO" id="GO:0002098">
    <property type="term" value="P:tRNA wobble uridine modification"/>
    <property type="evidence" value="ECO:0007669"/>
    <property type="project" value="InterPro"/>
</dbReference>
<dbReference type="FunFam" id="1.10.10.1800:FF:000001">
    <property type="entry name" value="tRNA uridine 5-carboxymethylaminomethyl modification enzyme MnmG"/>
    <property type="match status" value="1"/>
</dbReference>
<dbReference type="FunFam" id="1.10.150.570:FF:000001">
    <property type="entry name" value="tRNA uridine 5-carboxymethylaminomethyl modification enzyme MnmG"/>
    <property type="match status" value="1"/>
</dbReference>
<dbReference type="FunFam" id="3.50.50.60:FF:000002">
    <property type="entry name" value="tRNA uridine 5-carboxymethylaminomethyl modification enzyme MnmG"/>
    <property type="match status" value="1"/>
</dbReference>
<dbReference type="FunFam" id="3.50.50.60:FF:000010">
    <property type="entry name" value="tRNA uridine 5-carboxymethylaminomethyl modification enzyme MnmG"/>
    <property type="match status" value="1"/>
</dbReference>
<dbReference type="Gene3D" id="3.50.50.60">
    <property type="entry name" value="FAD/NAD(P)-binding domain"/>
    <property type="match status" value="2"/>
</dbReference>
<dbReference type="Gene3D" id="1.10.150.570">
    <property type="entry name" value="GidA associated domain, C-terminal subdomain"/>
    <property type="match status" value="1"/>
</dbReference>
<dbReference type="Gene3D" id="1.10.10.1800">
    <property type="entry name" value="tRNA uridine 5-carboxymethylaminomethyl modification enzyme MnmG/GidA"/>
    <property type="match status" value="1"/>
</dbReference>
<dbReference type="HAMAP" id="MF_00129">
    <property type="entry name" value="MnmG_GidA"/>
    <property type="match status" value="1"/>
</dbReference>
<dbReference type="InterPro" id="IPR036188">
    <property type="entry name" value="FAD/NAD-bd_sf"/>
</dbReference>
<dbReference type="InterPro" id="IPR049312">
    <property type="entry name" value="GIDA_C_N"/>
</dbReference>
<dbReference type="InterPro" id="IPR004416">
    <property type="entry name" value="MnmG"/>
</dbReference>
<dbReference type="InterPro" id="IPR002218">
    <property type="entry name" value="MnmG-rel"/>
</dbReference>
<dbReference type="InterPro" id="IPR020595">
    <property type="entry name" value="MnmG-rel_CS"/>
</dbReference>
<dbReference type="InterPro" id="IPR026904">
    <property type="entry name" value="MnmG_C"/>
</dbReference>
<dbReference type="InterPro" id="IPR047001">
    <property type="entry name" value="MnmG_C_subdom"/>
</dbReference>
<dbReference type="InterPro" id="IPR044920">
    <property type="entry name" value="MnmG_C_subdom_sf"/>
</dbReference>
<dbReference type="InterPro" id="IPR040131">
    <property type="entry name" value="MnmG_N"/>
</dbReference>
<dbReference type="NCBIfam" id="TIGR00136">
    <property type="entry name" value="mnmG_gidA"/>
    <property type="match status" value="1"/>
</dbReference>
<dbReference type="PANTHER" id="PTHR11806">
    <property type="entry name" value="GLUCOSE INHIBITED DIVISION PROTEIN A"/>
    <property type="match status" value="1"/>
</dbReference>
<dbReference type="PANTHER" id="PTHR11806:SF0">
    <property type="entry name" value="PROTEIN MTO1 HOMOLOG, MITOCHONDRIAL"/>
    <property type="match status" value="1"/>
</dbReference>
<dbReference type="Pfam" id="PF01134">
    <property type="entry name" value="GIDA"/>
    <property type="match status" value="1"/>
</dbReference>
<dbReference type="Pfam" id="PF21680">
    <property type="entry name" value="GIDA_C_1st"/>
    <property type="match status" value="1"/>
</dbReference>
<dbReference type="Pfam" id="PF13932">
    <property type="entry name" value="SAM_GIDA_C"/>
    <property type="match status" value="1"/>
</dbReference>
<dbReference type="SMART" id="SM01228">
    <property type="entry name" value="GIDA_assoc_3"/>
    <property type="match status" value="1"/>
</dbReference>
<dbReference type="SUPFAM" id="SSF51905">
    <property type="entry name" value="FAD/NAD(P)-binding domain"/>
    <property type="match status" value="1"/>
</dbReference>
<dbReference type="PROSITE" id="PS01280">
    <property type="entry name" value="GIDA_1"/>
    <property type="match status" value="1"/>
</dbReference>
<dbReference type="PROSITE" id="PS01281">
    <property type="entry name" value="GIDA_2"/>
    <property type="match status" value="1"/>
</dbReference>
<evidence type="ECO:0000255" key="1">
    <source>
        <dbReference type="HAMAP-Rule" id="MF_00129"/>
    </source>
</evidence>
<protein>
    <recommendedName>
        <fullName evidence="1">tRNA uridine 5-carboxymethylaminomethyl modification enzyme MnmG</fullName>
    </recommendedName>
    <alternativeName>
        <fullName evidence="1">Glucose-inhibited division protein A</fullName>
    </alternativeName>
</protein>
<comment type="function">
    <text evidence="1">NAD-binding protein involved in the addition of a carboxymethylaminomethyl (cmnm) group at the wobble position (U34) of certain tRNAs, forming tRNA-cmnm(5)s(2)U34.</text>
</comment>
<comment type="cofactor">
    <cofactor evidence="1">
        <name>FAD</name>
        <dbReference type="ChEBI" id="CHEBI:57692"/>
    </cofactor>
</comment>
<comment type="subunit">
    <text evidence="1">Homodimer. Heterotetramer of two MnmE and two MnmG subunits.</text>
</comment>
<comment type="subcellular location">
    <subcellularLocation>
        <location evidence="1">Cytoplasm</location>
    </subcellularLocation>
</comment>
<comment type="similarity">
    <text evidence="1">Belongs to the MnmG family.</text>
</comment>
<sequence>MFYPDQFDVIIIGGGHAGTEAAMAAARMGRQTLLLTHNIDTLGQMSCNPAIGGIGKGHLVKEIDALGGLMAKATDLAGIQFRILNASKGPAVRATRAQADRVLYRLAVRTALENQPNLMIFQQPVEDLIVENDRVVGAVTQMGLKFRAKAVVLTVGTFLDGKIHIGLENYSGGRAGDPPSISLSQRLRELPLRVNRLKTGTPPRIDARTIDFSQLTPQLGDTPIPVFSFLGNAEQHPEQMACHITYTNEKTHEVIRNNLDRSPMYAGIIEGIGPRYCPSIEDKVMRFADRNSHQIFLEPEGLTSNEIYPNGISTSLPFDVQMQIVRSMKGLENARIIRPGYAIEYDFFDPRDLKPTLESKYIQGLFFAGQINGTTGYEEAAAQGLLAGLNAGRFANEEDGWSPRRDEAYLGVLVDDLSTLGTKEPYRMFTSRAEYRLMLREDNADLRLTETGRKLGLVDDIRWAHFSQKVEQIEKERQRLRDIWVHPHSENVSEINALLKAPLSKEANGEELLRRPEIDYRLLTSLTSFGPALTDPQSADQVEIQVKYEGYITRQQEEIEKQLRNENTLLPVDLDYQQVSGLSNEVIAKLNDHKPSSIGQASRISGITPAAISILLVWLKKQGLLRRSA</sequence>
<name>MNMG_YERPP</name>
<gene>
    <name evidence="1" type="primary">mnmG</name>
    <name evidence="1" type="synonym">gidA</name>
    <name type="ordered locus">YPDSF_3905</name>
</gene>
<keyword id="KW-0963">Cytoplasm</keyword>
<keyword id="KW-0274">FAD</keyword>
<keyword id="KW-0285">Flavoprotein</keyword>
<keyword id="KW-0520">NAD</keyword>
<keyword id="KW-0819">tRNA processing</keyword>
<reference key="1">
    <citation type="submission" date="2007-02" db="EMBL/GenBank/DDBJ databases">
        <title>Complete sequence of chromosome of Yersinia pestis Pestoides F.</title>
        <authorList>
            <consortium name="US DOE Joint Genome Institute"/>
            <person name="Copeland A."/>
            <person name="Lucas S."/>
            <person name="Lapidus A."/>
            <person name="Barry K."/>
            <person name="Detter J.C."/>
            <person name="Glavina del Rio T."/>
            <person name="Hammon N."/>
            <person name="Israni S."/>
            <person name="Dalin E."/>
            <person name="Tice H."/>
            <person name="Pitluck S."/>
            <person name="Di Bartolo G."/>
            <person name="Chain P."/>
            <person name="Malfatti S."/>
            <person name="Shin M."/>
            <person name="Vergez L."/>
            <person name="Schmutz J."/>
            <person name="Larimer F."/>
            <person name="Land M."/>
            <person name="Hauser L."/>
            <person name="Worsham P."/>
            <person name="Chu M."/>
            <person name="Bearden S."/>
            <person name="Garcia E."/>
            <person name="Richardson P."/>
        </authorList>
    </citation>
    <scope>NUCLEOTIDE SEQUENCE [LARGE SCALE GENOMIC DNA]</scope>
    <source>
        <strain>Pestoides F</strain>
    </source>
</reference>